<dbReference type="EMBL" id="AE017220">
    <property type="protein sequence ID" value="AAX67128.1"/>
    <property type="molecule type" value="Genomic_DNA"/>
</dbReference>
<dbReference type="RefSeq" id="WP_000802069.1">
    <property type="nucleotide sequence ID" value="NC_006905.1"/>
</dbReference>
<dbReference type="SMR" id="Q57JI4"/>
<dbReference type="GeneID" id="66757621"/>
<dbReference type="KEGG" id="sec:SCH_3222"/>
<dbReference type="HOGENOM" id="CLU_071600_0_0_6"/>
<dbReference type="Proteomes" id="UP000000538">
    <property type="component" value="Chromosome"/>
</dbReference>
<dbReference type="GO" id="GO:0005886">
    <property type="term" value="C:plasma membrane"/>
    <property type="evidence" value="ECO:0007669"/>
    <property type="project" value="UniProtKB-SubCell"/>
</dbReference>
<dbReference type="GO" id="GO:0051301">
    <property type="term" value="P:cell division"/>
    <property type="evidence" value="ECO:0007669"/>
    <property type="project" value="UniProtKB-KW"/>
</dbReference>
<dbReference type="FunFam" id="1.25.40.10:FF:000021">
    <property type="entry name" value="Lipoprotein NlpI"/>
    <property type="match status" value="1"/>
</dbReference>
<dbReference type="Gene3D" id="1.25.40.10">
    <property type="entry name" value="Tetratricopeptide repeat domain"/>
    <property type="match status" value="1"/>
</dbReference>
<dbReference type="InterPro" id="IPR023605">
    <property type="entry name" value="Lipoprotein_NlpI"/>
</dbReference>
<dbReference type="InterPro" id="IPR011990">
    <property type="entry name" value="TPR-like_helical_dom_sf"/>
</dbReference>
<dbReference type="InterPro" id="IPR019734">
    <property type="entry name" value="TPR_rpt"/>
</dbReference>
<dbReference type="InterPro" id="IPR050498">
    <property type="entry name" value="Ycf3"/>
</dbReference>
<dbReference type="NCBIfam" id="NF008391">
    <property type="entry name" value="PRK11189.1"/>
    <property type="match status" value="1"/>
</dbReference>
<dbReference type="PANTHER" id="PTHR44858">
    <property type="entry name" value="TETRATRICOPEPTIDE REPEAT PROTEIN 6"/>
    <property type="match status" value="1"/>
</dbReference>
<dbReference type="PANTHER" id="PTHR44858:SF1">
    <property type="entry name" value="UDP-N-ACETYLGLUCOSAMINE--PEPTIDE N-ACETYLGLUCOSAMINYLTRANSFERASE SPINDLY-RELATED"/>
    <property type="match status" value="1"/>
</dbReference>
<dbReference type="Pfam" id="PF13432">
    <property type="entry name" value="TPR_16"/>
    <property type="match status" value="1"/>
</dbReference>
<dbReference type="PIRSF" id="PIRSF004654">
    <property type="entry name" value="NlpI"/>
    <property type="match status" value="1"/>
</dbReference>
<dbReference type="SMART" id="SM00028">
    <property type="entry name" value="TPR"/>
    <property type="match status" value="3"/>
</dbReference>
<dbReference type="SUPFAM" id="SSF48452">
    <property type="entry name" value="TPR-like"/>
    <property type="match status" value="1"/>
</dbReference>
<dbReference type="PROSITE" id="PS51257">
    <property type="entry name" value="PROKAR_LIPOPROTEIN"/>
    <property type="match status" value="1"/>
</dbReference>
<dbReference type="PROSITE" id="PS50005">
    <property type="entry name" value="TPR"/>
    <property type="match status" value="3"/>
</dbReference>
<dbReference type="PROSITE" id="PS50293">
    <property type="entry name" value="TPR_REGION"/>
    <property type="match status" value="2"/>
</dbReference>
<name>NLPI_SALCH</name>
<feature type="signal peptide" evidence="2">
    <location>
        <begin position="1"/>
        <end position="18"/>
    </location>
</feature>
<feature type="chain" id="PRO_0000413480" description="Lipoprotein NlpI">
    <location>
        <begin position="19"/>
        <end position="294"/>
    </location>
</feature>
<feature type="repeat" description="TPR 1">
    <location>
        <begin position="62"/>
        <end position="95"/>
    </location>
</feature>
<feature type="repeat" description="TPR 2">
    <location>
        <begin position="96"/>
        <end position="129"/>
    </location>
</feature>
<feature type="repeat" description="TPR 3">
    <location>
        <begin position="234"/>
        <end position="267"/>
    </location>
</feature>
<feature type="lipid moiety-binding region" description="N-palmitoyl cysteine" evidence="2">
    <location>
        <position position="19"/>
    </location>
</feature>
<feature type="lipid moiety-binding region" description="S-diacylglycerol cysteine" evidence="2">
    <location>
        <position position="19"/>
    </location>
</feature>
<organism>
    <name type="scientific">Salmonella choleraesuis (strain SC-B67)</name>
    <dbReference type="NCBI Taxonomy" id="321314"/>
    <lineage>
        <taxon>Bacteria</taxon>
        <taxon>Pseudomonadati</taxon>
        <taxon>Pseudomonadota</taxon>
        <taxon>Gammaproteobacteria</taxon>
        <taxon>Enterobacterales</taxon>
        <taxon>Enterobacteriaceae</taxon>
        <taxon>Salmonella</taxon>
    </lineage>
</organism>
<sequence length="294" mass="33512">MKPFLRWCFVATALTLAGCSNSAWRKSEVLAVPLQPTLQQEVILARMEQILASRALTDDERAQLLYERGVLYDSLGLRALARNDFSQALAIRPDMPEVFNYLGIYLTQAGNFDAAYEAFDSVLELDPTYNYAHLNRGIALYYGGRDKLAQDDLLAFYQDDPNDPYRSLWLYLVEQKLNEKQAKEALKARFEKSDKEQWGWNIVEFYLGDISEATLMERLKADATDNTSLAEHLSETNFYLGKYYLSLGDLDSATALFKLAVANNVHNFVEHRYALLELSLLGQDQDDLAESDQQ</sequence>
<proteinExistence type="inferred from homology"/>
<reference key="1">
    <citation type="journal article" date="2005" name="Nucleic Acids Res.">
        <title>The genome sequence of Salmonella enterica serovar Choleraesuis, a highly invasive and resistant zoonotic pathogen.</title>
        <authorList>
            <person name="Chiu C.-H."/>
            <person name="Tang P."/>
            <person name="Chu C."/>
            <person name="Hu S."/>
            <person name="Bao Q."/>
            <person name="Yu J."/>
            <person name="Chou Y.-Y."/>
            <person name="Wang H.-S."/>
            <person name="Lee Y.-S."/>
        </authorList>
    </citation>
    <scope>NUCLEOTIDE SEQUENCE [LARGE SCALE GENOMIC DNA]</scope>
    <source>
        <strain>SC-B67</strain>
    </source>
</reference>
<protein>
    <recommendedName>
        <fullName>Lipoprotein NlpI</fullName>
    </recommendedName>
</protein>
<gene>
    <name type="primary">nlpI</name>
    <name type="ordered locus">SCH_3222</name>
</gene>
<evidence type="ECO:0000250" key="1"/>
<evidence type="ECO:0000255" key="2">
    <source>
        <dbReference type="PROSITE-ProRule" id="PRU00303"/>
    </source>
</evidence>
<keyword id="KW-0131">Cell cycle</keyword>
<keyword id="KW-0132">Cell division</keyword>
<keyword id="KW-1003">Cell membrane</keyword>
<keyword id="KW-0449">Lipoprotein</keyword>
<keyword id="KW-0472">Membrane</keyword>
<keyword id="KW-0564">Palmitate</keyword>
<keyword id="KW-0677">Repeat</keyword>
<keyword id="KW-0732">Signal</keyword>
<keyword id="KW-0802">TPR repeat</keyword>
<accession>Q57JI4</accession>
<comment type="function">
    <text evidence="1">May be involved in cell division. May play a role in bacterial septation or regulation of cell wall degradation during cell division (By similarity).</text>
</comment>
<comment type="subunit">
    <text evidence="1">Homodimer.</text>
</comment>
<comment type="subcellular location">
    <subcellularLocation>
        <location evidence="2">Cell membrane</location>
        <topology evidence="2">Lipid-anchor</topology>
    </subcellularLocation>
</comment>